<proteinExistence type="evidence at protein level"/>
<organism>
    <name type="scientific">Homo sapiens</name>
    <name type="common">Human</name>
    <dbReference type="NCBI Taxonomy" id="9606"/>
    <lineage>
        <taxon>Eukaryota</taxon>
        <taxon>Metazoa</taxon>
        <taxon>Chordata</taxon>
        <taxon>Craniata</taxon>
        <taxon>Vertebrata</taxon>
        <taxon>Euteleostomi</taxon>
        <taxon>Mammalia</taxon>
        <taxon>Eutheria</taxon>
        <taxon>Euarchontoglires</taxon>
        <taxon>Primates</taxon>
        <taxon>Haplorrhini</taxon>
        <taxon>Catarrhini</taxon>
        <taxon>Hominidae</taxon>
        <taxon>Homo</taxon>
    </lineage>
</organism>
<dbReference type="EMBL" id="AB011094">
    <property type="protein sequence ID" value="BAA25448.1"/>
    <property type="status" value="ALT_SEQ"/>
    <property type="molecule type" value="mRNA"/>
</dbReference>
<dbReference type="EMBL" id="AK095232">
    <property type="protein sequence ID" value="BAG53009.1"/>
    <property type="molecule type" value="mRNA"/>
</dbReference>
<dbReference type="EMBL" id="AC245102">
    <property type="status" value="NOT_ANNOTATED_CDS"/>
    <property type="molecule type" value="Genomic_DNA"/>
</dbReference>
<dbReference type="EMBL" id="AL161779">
    <property type="protein sequence ID" value="CAI42091.1"/>
    <property type="status" value="ALT_SEQ"/>
    <property type="molecule type" value="Genomic_DNA"/>
</dbReference>
<dbReference type="EMBL" id="AL139396">
    <property type="protein sequence ID" value="CAI42091.1"/>
    <property type="status" value="JOINED"/>
    <property type="molecule type" value="Genomic_DNA"/>
</dbReference>
<dbReference type="EMBL" id="FJ154891">
    <property type="protein sequence ID" value="ACR15956.1"/>
    <property type="molecule type" value="mRNA"/>
</dbReference>
<dbReference type="CCDS" id="CCDS35298.1">
    <molecule id="Q5JU85-3"/>
</dbReference>
<dbReference type="CCDS" id="CCDS48130.1">
    <molecule id="Q5JU85-2"/>
</dbReference>
<dbReference type="CCDS" id="CCDS87748.1">
    <molecule id="Q5JU85-4"/>
</dbReference>
<dbReference type="PIR" id="T00080">
    <property type="entry name" value="T00080"/>
</dbReference>
<dbReference type="RefSeq" id="NP_001104595.1">
    <molecule id="Q5JU85-2"/>
    <property type="nucleotide sequence ID" value="NM_001111125.3"/>
</dbReference>
<dbReference type="RefSeq" id="NP_001230126.1">
    <molecule id="Q5JU85-4"/>
    <property type="nucleotide sequence ID" value="NM_001243197.2"/>
</dbReference>
<dbReference type="RefSeq" id="NP_055890.1">
    <molecule id="Q5JU85-3"/>
    <property type="nucleotide sequence ID" value="NM_015075.2"/>
</dbReference>
<dbReference type="RefSeq" id="XP_016884848.1">
    <property type="nucleotide sequence ID" value="XM_017029359.1"/>
</dbReference>
<dbReference type="PDB" id="6FAE">
    <property type="method" value="X-ray"/>
    <property type="resolution" value="2.35 A"/>
    <property type="chains" value="A=729-1099"/>
</dbReference>
<dbReference type="PDBsum" id="6FAE"/>
<dbReference type="SMR" id="Q5JU85"/>
<dbReference type="BioGRID" id="116724">
    <property type="interactions" value="57"/>
</dbReference>
<dbReference type="DIP" id="DIP-59490N"/>
<dbReference type="FunCoup" id="Q5JU85">
    <property type="interactions" value="340"/>
</dbReference>
<dbReference type="IntAct" id="Q5JU85">
    <property type="interactions" value="22"/>
</dbReference>
<dbReference type="MINT" id="Q5JU85"/>
<dbReference type="STRING" id="9606.ENSP00000495726"/>
<dbReference type="GlyGen" id="Q5JU85">
    <property type="glycosylation" value="3 sites, 2 N-linked glycans (2 sites), 1 O-linked glycan (1 site)"/>
</dbReference>
<dbReference type="iPTMnet" id="Q5JU85"/>
<dbReference type="PhosphoSitePlus" id="Q5JU85"/>
<dbReference type="BioMuta" id="IQSEC2"/>
<dbReference type="DMDM" id="74742276"/>
<dbReference type="jPOST" id="Q5JU85"/>
<dbReference type="MassIVE" id="Q5JU85"/>
<dbReference type="PaxDb" id="9606-ENSP00000379712"/>
<dbReference type="PeptideAtlas" id="Q5JU85"/>
<dbReference type="ProteomicsDB" id="63261">
    <molecule id="Q5JU85-2"/>
</dbReference>
<dbReference type="ProteomicsDB" id="63262">
    <molecule id="Q5JU85-3"/>
</dbReference>
<dbReference type="Pumba" id="Q5JU85"/>
<dbReference type="Antibodypedia" id="583">
    <property type="antibodies" value="68 antibodies from 21 providers"/>
</dbReference>
<dbReference type="DNASU" id="23096"/>
<dbReference type="Ensembl" id="ENST00000375365.2">
    <molecule id="Q5JU85-3"/>
    <property type="protein sequence ID" value="ENSP00000364514.2"/>
    <property type="gene ID" value="ENSG00000124313.19"/>
</dbReference>
<dbReference type="Ensembl" id="ENST00000639161.2">
    <molecule id="Q5JU85-4"/>
    <property type="protein sequence ID" value="ENSP00000491796.1"/>
    <property type="gene ID" value="ENSG00000124313.19"/>
</dbReference>
<dbReference type="Ensembl" id="ENST00000642864.1">
    <molecule id="Q5JU85-2"/>
    <property type="protein sequence ID" value="ENSP00000495726.1"/>
    <property type="gene ID" value="ENSG00000124313.19"/>
</dbReference>
<dbReference type="Ensembl" id="ENST00000674510.1">
    <molecule id="Q5JU85-2"/>
    <property type="protein sequence ID" value="ENSP00000502054.1"/>
    <property type="gene ID" value="ENSG00000124313.19"/>
</dbReference>
<dbReference type="GeneID" id="23096"/>
<dbReference type="KEGG" id="hsa:23096"/>
<dbReference type="MANE-Select" id="ENST00000642864.1">
    <property type="protein sequence ID" value="ENSP00000495726.1"/>
    <property type="RefSeq nucleotide sequence ID" value="NM_001111125.3"/>
    <property type="RefSeq protein sequence ID" value="NP_001104595.1"/>
</dbReference>
<dbReference type="UCSC" id="uc004dsc.4">
    <molecule id="Q5JU85-2"/>
    <property type="organism name" value="human"/>
</dbReference>
<dbReference type="AGR" id="HGNC:29059"/>
<dbReference type="CTD" id="23096"/>
<dbReference type="DisGeNET" id="23096"/>
<dbReference type="GeneCards" id="IQSEC2"/>
<dbReference type="HGNC" id="HGNC:29059">
    <property type="gene designation" value="IQSEC2"/>
</dbReference>
<dbReference type="HPA" id="ENSG00000124313">
    <property type="expression patterns" value="Tissue enhanced (skeletal)"/>
</dbReference>
<dbReference type="MalaCards" id="IQSEC2"/>
<dbReference type="MIM" id="300522">
    <property type="type" value="gene"/>
</dbReference>
<dbReference type="MIM" id="309530">
    <property type="type" value="phenotype"/>
</dbReference>
<dbReference type="neXtProt" id="NX_Q5JU85"/>
<dbReference type="OpenTargets" id="ENSG00000124313"/>
<dbReference type="Orphanet" id="217377">
    <property type="disease" value="Microduplication Xp11.22p11.23 syndrome"/>
</dbReference>
<dbReference type="Orphanet" id="397933">
    <property type="disease" value="Severe intellectual disability-progressive postnatal microcephaly-midline stereotypic hand movements syndrome"/>
</dbReference>
<dbReference type="Orphanet" id="819">
    <property type="disease" value="Smith-Magenis syndrome"/>
</dbReference>
<dbReference type="Orphanet" id="777">
    <property type="disease" value="X-linked non-syndromic intellectual disability"/>
</dbReference>
<dbReference type="PharmGKB" id="PA134870898"/>
<dbReference type="VEuPathDB" id="HostDB:ENSG00000124313"/>
<dbReference type="eggNOG" id="KOG0931">
    <property type="taxonomic scope" value="Eukaryota"/>
</dbReference>
<dbReference type="GeneTree" id="ENSGT00940000159667"/>
<dbReference type="HOGENOM" id="CLU_004328_0_0_1"/>
<dbReference type="InParanoid" id="Q5JU85"/>
<dbReference type="OMA" id="CQTRRVQ"/>
<dbReference type="OrthoDB" id="430364at2759"/>
<dbReference type="PAN-GO" id="Q5JU85">
    <property type="GO annotations" value="1 GO annotation based on evolutionary models"/>
</dbReference>
<dbReference type="PhylomeDB" id="Q5JU85"/>
<dbReference type="TreeFam" id="TF323811"/>
<dbReference type="PathwayCommons" id="Q5JU85"/>
<dbReference type="SignaLink" id="Q5JU85"/>
<dbReference type="SIGNOR" id="Q5JU85"/>
<dbReference type="BioGRID-ORCS" id="23096">
    <property type="hits" value="14 hits in 779 CRISPR screens"/>
</dbReference>
<dbReference type="CD-CODE" id="FB4E32DD">
    <property type="entry name" value="Presynaptic clusters and postsynaptic densities"/>
</dbReference>
<dbReference type="ChiTaRS" id="IQSEC2">
    <property type="organism name" value="human"/>
</dbReference>
<dbReference type="GeneWiki" id="IQSEC2"/>
<dbReference type="GenomeRNAi" id="23096"/>
<dbReference type="Pharos" id="Q5JU85">
    <property type="development level" value="Tbio"/>
</dbReference>
<dbReference type="PRO" id="PR:Q5JU85"/>
<dbReference type="Proteomes" id="UP000005640">
    <property type="component" value="Chromosome X"/>
</dbReference>
<dbReference type="RNAct" id="Q5JU85">
    <property type="molecule type" value="protein"/>
</dbReference>
<dbReference type="Bgee" id="ENSG00000124313">
    <property type="expression patterns" value="Expressed in right hemisphere of cerebellum and 165 other cell types or tissues"/>
</dbReference>
<dbReference type="ExpressionAtlas" id="Q5JU85">
    <property type="expression patterns" value="baseline and differential"/>
</dbReference>
<dbReference type="GO" id="GO:0005737">
    <property type="term" value="C:cytoplasm"/>
    <property type="evidence" value="ECO:0007669"/>
    <property type="project" value="UniProtKB-SubCell"/>
</dbReference>
<dbReference type="GO" id="GO:0098685">
    <property type="term" value="C:Schaffer collateral - CA1 synapse"/>
    <property type="evidence" value="ECO:0000314"/>
    <property type="project" value="SynGO"/>
</dbReference>
<dbReference type="GO" id="GO:0005085">
    <property type="term" value="F:guanyl-nucleotide exchange factor activity"/>
    <property type="evidence" value="ECO:0000315"/>
    <property type="project" value="UniProtKB"/>
</dbReference>
<dbReference type="GO" id="GO:0030036">
    <property type="term" value="P:actin cytoskeleton organization"/>
    <property type="evidence" value="ECO:0000318"/>
    <property type="project" value="GO_Central"/>
</dbReference>
<dbReference type="GO" id="GO:0050804">
    <property type="term" value="P:modulation of chemical synaptic transmission"/>
    <property type="evidence" value="ECO:0000314"/>
    <property type="project" value="SynGO"/>
</dbReference>
<dbReference type="GO" id="GO:1900454">
    <property type="term" value="P:positive regulation of long-term synaptic depression"/>
    <property type="evidence" value="ECO:0007669"/>
    <property type="project" value="Ensembl"/>
</dbReference>
<dbReference type="GO" id="GO:0051965">
    <property type="term" value="P:positive regulation of synapse assembly"/>
    <property type="evidence" value="ECO:0007669"/>
    <property type="project" value="Ensembl"/>
</dbReference>
<dbReference type="GO" id="GO:0051968">
    <property type="term" value="P:positive regulation of synaptic transmission, glutamatergic"/>
    <property type="evidence" value="ECO:0007669"/>
    <property type="project" value="Ensembl"/>
</dbReference>
<dbReference type="GO" id="GO:0032012">
    <property type="term" value="P:regulation of ARF protein signal transduction"/>
    <property type="evidence" value="ECO:0007669"/>
    <property type="project" value="Ensembl"/>
</dbReference>
<dbReference type="GO" id="GO:0098696">
    <property type="term" value="P:regulation of neurotransmitter receptor localization to postsynaptic specialization membrane"/>
    <property type="evidence" value="ECO:0000314"/>
    <property type="project" value="SynGO"/>
</dbReference>
<dbReference type="CDD" id="cd13318">
    <property type="entry name" value="PH_IQSEC"/>
    <property type="match status" value="1"/>
</dbReference>
<dbReference type="CDD" id="cd00171">
    <property type="entry name" value="Sec7"/>
    <property type="match status" value="1"/>
</dbReference>
<dbReference type="FunFam" id="1.10.1000.11:FF:000001">
    <property type="entry name" value="IQ motif and SEC7 domain-containing protein 1"/>
    <property type="match status" value="1"/>
</dbReference>
<dbReference type="FunFam" id="1.10.220.20:FF:000001">
    <property type="entry name" value="IQ motif and SEC7 domain-containing protein 1"/>
    <property type="match status" value="1"/>
</dbReference>
<dbReference type="FunFam" id="2.30.29.30:FF:000004">
    <property type="entry name" value="IQ motif and SEC7 domain-containing protein 1"/>
    <property type="match status" value="1"/>
</dbReference>
<dbReference type="Gene3D" id="1.10.220.20">
    <property type="match status" value="1"/>
</dbReference>
<dbReference type="Gene3D" id="1.10.1000.11">
    <property type="entry name" value="Arf Nucleotide-binding Site Opener,domain 2"/>
    <property type="match status" value="1"/>
</dbReference>
<dbReference type="Gene3D" id="2.30.29.30">
    <property type="entry name" value="Pleckstrin-homology domain (PH domain)/Phosphotyrosine-binding domain (PTB)"/>
    <property type="match status" value="1"/>
</dbReference>
<dbReference type="InterPro" id="IPR033742">
    <property type="entry name" value="IQSEC_PH"/>
</dbReference>
<dbReference type="InterPro" id="IPR011993">
    <property type="entry name" value="PH-like_dom_sf"/>
</dbReference>
<dbReference type="InterPro" id="IPR001849">
    <property type="entry name" value="PH_domain"/>
</dbReference>
<dbReference type="InterPro" id="IPR023394">
    <property type="entry name" value="Sec7_C_sf"/>
</dbReference>
<dbReference type="InterPro" id="IPR000904">
    <property type="entry name" value="Sec7_dom"/>
</dbReference>
<dbReference type="InterPro" id="IPR035999">
    <property type="entry name" value="Sec7_dom_sf"/>
</dbReference>
<dbReference type="PANTHER" id="PTHR10663">
    <property type="entry name" value="GUANYL-NUCLEOTIDE EXCHANGE FACTOR"/>
    <property type="match status" value="1"/>
</dbReference>
<dbReference type="PANTHER" id="PTHR10663:SF314">
    <property type="entry name" value="IQ MOTIF AND SEC7 DOMAIN-CONTAINING PROTEIN 2"/>
    <property type="match status" value="1"/>
</dbReference>
<dbReference type="Pfam" id="PF16453">
    <property type="entry name" value="IQ_SEC7_PH"/>
    <property type="match status" value="1"/>
</dbReference>
<dbReference type="Pfam" id="PF01369">
    <property type="entry name" value="Sec7"/>
    <property type="match status" value="1"/>
</dbReference>
<dbReference type="SMART" id="SM00233">
    <property type="entry name" value="PH"/>
    <property type="match status" value="1"/>
</dbReference>
<dbReference type="SMART" id="SM00222">
    <property type="entry name" value="Sec7"/>
    <property type="match status" value="1"/>
</dbReference>
<dbReference type="SUPFAM" id="SSF50729">
    <property type="entry name" value="PH domain-like"/>
    <property type="match status" value="1"/>
</dbReference>
<dbReference type="SUPFAM" id="SSF48425">
    <property type="entry name" value="Sec7 domain"/>
    <property type="match status" value="1"/>
</dbReference>
<dbReference type="PROSITE" id="PS50096">
    <property type="entry name" value="IQ"/>
    <property type="match status" value="1"/>
</dbReference>
<dbReference type="PROSITE" id="PS50190">
    <property type="entry name" value="SEC7"/>
    <property type="match status" value="1"/>
</dbReference>
<comment type="function">
    <text evidence="7">Is a guanine nucleotide exchange factor for the ARF GTP-binding proteins.</text>
</comment>
<comment type="interaction">
    <interactant intactId="EBI-11028607">
        <id>Q5JU85</id>
    </interactant>
    <interactant intactId="EBI-25817233">
        <id>P0DP23</id>
        <label>CALM1</label>
    </interactant>
    <organismsDiffer>false</organismsDiffer>
    <experiments>2</experiments>
</comment>
<comment type="subcellular location">
    <subcellularLocation>
        <location evidence="11">Cytoplasm</location>
    </subcellularLocation>
</comment>
<comment type="alternative products">
    <event type="alternative splicing"/>
    <isoform>
        <id>Q5JU85-2</id>
        <name>1</name>
        <sequence type="displayed"/>
    </isoform>
    <isoform>
        <id>Q5JU85-3</id>
        <name>2</name>
        <sequence type="described" ref="VSP_041372 VSP_041373 VSP_041374"/>
    </isoform>
    <isoform>
        <id>Q5JU85-4</id>
        <name>3</name>
        <sequence type="described" ref="VSP_059605 VSP_059606"/>
    </isoform>
</comment>
<comment type="tissue specificity">
    <text evidence="8">Expressed in brain, kidney and small intestine. Weakly expressed in placenta, pancreas, ovary, prostate and liver.</text>
</comment>
<comment type="disease" evidence="6 7">
    <disease id="DI-02789">
        <name>Intellectual developmental disorder, X-linked 1</name>
        <acronym>XLID1</acronym>
        <description>A disorder characterized by significantly below average general intellectual functioning associated with impairments in adaptive behavior and manifested during the developmental period. Intellectual deficiency is the only primary symptom of non-syndromic X-linked forms, while syndromic forms present with associated physical, neurological and/or psychiatric manifestations.</description>
        <dbReference type="MIM" id="309530"/>
    </disease>
    <text>The disease is caused by variants affecting the gene represented in this entry.</text>
</comment>
<comment type="similarity">
    <text evidence="11">Belongs to the BRAG family.</text>
</comment>
<comment type="sequence caution" evidence="11">
    <conflict type="erroneous initiation">
        <sequence resource="EMBL-CDS" id="BAA25448"/>
    </conflict>
    <text>Extended N-terminus.</text>
</comment>
<comment type="sequence caution" evidence="11">
    <conflict type="frameshift">
        <sequence resource="EMBL-CDS" id="BAA25448"/>
    </conflict>
</comment>
<comment type="sequence caution" evidence="11">
    <conflict type="erroneous gene model prediction">
        <sequence resource="EMBL-CDS" id="CAI42091"/>
    </conflict>
</comment>
<accession>Q5JU85</accession>
<accession>A0A1W2PQN3</accession>
<accession>B3KT97</accession>
<accession>C7SDG1</accession>
<accession>O60275</accession>
<accession>Q5JUX1</accession>
<sequence>MEAGSGPPGGPGSESPNRAVEYLLELNNIIESQQQLLETQRRRIEELEGQLDQLTQENRDLREESQLHRGELHRDPHGARDSPGRESQYQNLRETQFHHRELRESQFHQAARDVGYPNREGAYQNREAVYRDKERDASYPLQDTTGYTARERDVAQCHLHHENPALGRERGGREAGPAHPGREKEAGYSAAVGVGPRPPRERGQLSRGASRSSSPGAGGGHSTSTSTSPATTLQRKSDGENSRTVSVEGDAPGSDLSTAVDSPGSQPPYRLSQLPPSSSHMGGPPAGVGLPWAQRARLQPASVALRKQEEEEIKRSKALSDSYELSTDLQDKKVEMLERKYGGSFLSRRAARTIQTAFRQYRMNKNFERLRSSASESRMSRRIILSNMRMQFSFEEYEKAQNPAYFEGKPASLDEGAMAGARSHRLERGLPYGGSCGGGIDGGGSSVTTSGEFSNDITELEDSFSKQVKSLAESIDEALNCHPSGPMSEEPGSAQLEKRESKEQQEDSSATSFSDLPLYLDDTVPQQSPERLPSTEPPPQGRPEFWAPAPLPPVPPPVPSGTREDGSREEGTRRGPGCLECRDFRLRAAHLPLLTIEPPSDSSVDLSDRSDRGSVHRQLVYEADGCSPHGTLKHKGPPGRAPIPHRHYPAPEGPAPAPPGPLPPAPNSGTGPSGVAGGRRLGKCEAAGENSDGGDNESLESSSNSNETINCSSGSSSRDSLREPPATGLCKQTYQRETRHSWDSPAFNNDVVQRRHYRIGLNLFNKKPEKGIQYLIERGFLSDTPVGVAHFILERKGLSRQMIGEFLGNRQKQFNRDVLDCVVDEMDFSSMDLDDALRKFQSHIRVQGEAQKVERLIEAFSQRYCVCNPALVRQFRNPDTIFILAFAIILLNTDMYSPSVKAERKMKLDDFIKNLRGVDNGEDIPRDLLVGIYQRIQGRELRTNDDHVSQVQAVERMIVGKKPVLSLPHRRLVCCCQLYEVPDPNRPQRLGLHQREVFLFNDLLVVTKIFQKKKILVTYSFRQSFPLVEMHMQLFQNSYYQFGIKLLSAVPGGERKVLIIFNAPSLQDRLRFTSDLRESIAEVQEMEKYRVESELEKQKGMMRPNASQPGGAKDSVNGTMARSSLEDTYGAGDGLKRGALSSSLRDLSDAGKRGRRNSVGSLDSTIEGSVISSPRPHQRMPPPPPPPPPEEYKSQRPVSNSSSFLGSLFGSKRGKGPFQMPPPPTGQASASSSSASSTHHHHHHHHHGHSHGGLGVLPDGQSKLQALHAQYCQGPGPAPPPYLPPQQPSLPPPPQQPPPLPQLGSIPPPPASAPPVGPHRHFHAHGPVPGPQHYTLGRPGRAPRRGAGGHPQFAPHGRHPLHQPTSPLPLYSPAPQHPPAHKQGPKHFIFSHHPQMMPAAGAAGGPGSRPPGGSYSHPHHPQSPLSPHSPIPPHPSYPPLPPPSPHTPHSPLPPTSPHGPLHASGPPGTANPPSANPKAKPSRISTVV</sequence>
<name>IQEC2_HUMAN</name>
<evidence type="ECO:0000250" key="1">
    <source>
        <dbReference type="UniProtKB" id="Q5DU25"/>
    </source>
</evidence>
<evidence type="ECO:0000255" key="2"/>
<evidence type="ECO:0000255" key="3">
    <source>
        <dbReference type="PROSITE-ProRule" id="PRU00116"/>
    </source>
</evidence>
<evidence type="ECO:0000255" key="4">
    <source>
        <dbReference type="PROSITE-ProRule" id="PRU00189"/>
    </source>
</evidence>
<evidence type="ECO:0000256" key="5">
    <source>
        <dbReference type="SAM" id="MobiDB-lite"/>
    </source>
</evidence>
<evidence type="ECO:0000269" key="6">
    <source>
    </source>
</evidence>
<evidence type="ECO:0000269" key="7">
    <source>
    </source>
</evidence>
<evidence type="ECO:0000269" key="8">
    <source>
    </source>
</evidence>
<evidence type="ECO:0000303" key="9">
    <source>
    </source>
</evidence>
<evidence type="ECO:0000303" key="10">
    <source ref="4"/>
</evidence>
<evidence type="ECO:0000305" key="11"/>
<evidence type="ECO:0007744" key="12">
    <source>
    </source>
</evidence>
<evidence type="ECO:0007744" key="13">
    <source>
    </source>
</evidence>
<evidence type="ECO:0007829" key="14">
    <source>
        <dbReference type="PDB" id="6FAE"/>
    </source>
</evidence>
<keyword id="KW-0002">3D-structure</keyword>
<keyword id="KW-0025">Alternative splicing</keyword>
<keyword id="KW-0175">Coiled coil</keyword>
<keyword id="KW-0963">Cytoplasm</keyword>
<keyword id="KW-0225">Disease variant</keyword>
<keyword id="KW-0991">Intellectual disability</keyword>
<keyword id="KW-0488">Methylation</keyword>
<keyword id="KW-0597">Phosphoprotein</keyword>
<keyword id="KW-1267">Proteomics identification</keyword>
<keyword id="KW-1185">Reference proteome</keyword>
<feature type="chain" id="PRO_0000245608" description="IQ motif and SEC7 domain-containing protein 2">
    <location>
        <begin position="1"/>
        <end position="1488"/>
    </location>
</feature>
<feature type="domain" description="IQ" evidence="3">
    <location>
        <begin position="347"/>
        <end position="376"/>
    </location>
</feature>
<feature type="domain" description="SEC7" evidence="4">
    <location>
        <begin position="746"/>
        <end position="939"/>
    </location>
</feature>
<feature type="region of interest" description="Disordered" evidence="5">
    <location>
        <begin position="50"/>
        <end position="88"/>
    </location>
</feature>
<feature type="region of interest" description="Disordered" evidence="5">
    <location>
        <begin position="107"/>
        <end position="147"/>
    </location>
</feature>
<feature type="region of interest" description="Disordered" evidence="5">
    <location>
        <begin position="161"/>
        <end position="290"/>
    </location>
</feature>
<feature type="region of interest" description="Disordered" evidence="5">
    <location>
        <begin position="479"/>
        <end position="578"/>
    </location>
</feature>
<feature type="region of interest" description="Disordered" evidence="5">
    <location>
        <begin position="623"/>
        <end position="726"/>
    </location>
</feature>
<feature type="region of interest" description="Disordered" evidence="5">
    <location>
        <begin position="1091"/>
        <end position="1259"/>
    </location>
</feature>
<feature type="region of interest" description="Disordered" evidence="5">
    <location>
        <begin position="1271"/>
        <end position="1488"/>
    </location>
</feature>
<feature type="coiled-coil region" evidence="2">
    <location>
        <begin position="23"/>
        <end position="74"/>
    </location>
</feature>
<feature type="compositionally biased region" description="Basic and acidic residues" evidence="5">
    <location>
        <begin position="57"/>
        <end position="84"/>
    </location>
</feature>
<feature type="compositionally biased region" description="Basic and acidic residues" evidence="5">
    <location>
        <begin position="128"/>
        <end position="137"/>
    </location>
</feature>
<feature type="compositionally biased region" description="Basic and acidic residues" evidence="5">
    <location>
        <begin position="161"/>
        <end position="173"/>
    </location>
</feature>
<feature type="compositionally biased region" description="Low complexity" evidence="5">
    <location>
        <begin position="206"/>
        <end position="215"/>
    </location>
</feature>
<feature type="compositionally biased region" description="Low complexity" evidence="5">
    <location>
        <begin position="222"/>
        <end position="232"/>
    </location>
</feature>
<feature type="compositionally biased region" description="Polar residues" evidence="5">
    <location>
        <begin position="255"/>
        <end position="264"/>
    </location>
</feature>
<feature type="compositionally biased region" description="Basic and acidic residues" evidence="5">
    <location>
        <begin position="496"/>
        <end position="505"/>
    </location>
</feature>
<feature type="compositionally biased region" description="Pro residues" evidence="5">
    <location>
        <begin position="549"/>
        <end position="559"/>
    </location>
</feature>
<feature type="compositionally biased region" description="Basic and acidic residues" evidence="5">
    <location>
        <begin position="562"/>
        <end position="573"/>
    </location>
</feature>
<feature type="compositionally biased region" description="Basic residues" evidence="5">
    <location>
        <begin position="631"/>
        <end position="648"/>
    </location>
</feature>
<feature type="compositionally biased region" description="Pro residues" evidence="5">
    <location>
        <begin position="651"/>
        <end position="666"/>
    </location>
</feature>
<feature type="compositionally biased region" description="Low complexity" evidence="5">
    <location>
        <begin position="699"/>
        <end position="718"/>
    </location>
</feature>
<feature type="compositionally biased region" description="Polar residues" evidence="5">
    <location>
        <begin position="1158"/>
        <end position="1172"/>
    </location>
</feature>
<feature type="compositionally biased region" description="Pro residues" evidence="5">
    <location>
        <begin position="1179"/>
        <end position="1189"/>
    </location>
</feature>
<feature type="compositionally biased region" description="Low complexity" evidence="5">
    <location>
        <begin position="1201"/>
        <end position="1211"/>
    </location>
</feature>
<feature type="compositionally biased region" description="Low complexity" evidence="5">
    <location>
        <begin position="1228"/>
        <end position="1237"/>
    </location>
</feature>
<feature type="compositionally biased region" description="Basic residues" evidence="5">
    <location>
        <begin position="1238"/>
        <end position="1250"/>
    </location>
</feature>
<feature type="compositionally biased region" description="Pro residues" evidence="5">
    <location>
        <begin position="1276"/>
        <end position="1317"/>
    </location>
</feature>
<feature type="compositionally biased region" description="Pro residues" evidence="5">
    <location>
        <begin position="1366"/>
        <end position="1378"/>
    </location>
</feature>
<feature type="compositionally biased region" description="Low complexity" evidence="5">
    <location>
        <begin position="1392"/>
        <end position="1401"/>
    </location>
</feature>
<feature type="compositionally biased region" description="Low complexity" evidence="5">
    <location>
        <begin position="1411"/>
        <end position="1426"/>
    </location>
</feature>
<feature type="compositionally biased region" description="Pro residues" evidence="5">
    <location>
        <begin position="1427"/>
        <end position="1457"/>
    </location>
</feature>
<feature type="modified residue" description="Phosphoserine" evidence="1">
    <location>
        <position position="82"/>
    </location>
</feature>
<feature type="modified residue" description="Phosphoserine" evidence="1">
    <location>
        <position position="228"/>
    </location>
</feature>
<feature type="modified residue" description="Phosphoserine" evidence="13">
    <location>
        <position position="344"/>
    </location>
</feature>
<feature type="modified residue" description="Phosphoserine" evidence="12 13">
    <location>
        <position position="393"/>
    </location>
</feature>
<feature type="modified residue" description="Phosphoserine" evidence="13">
    <location>
        <position position="412"/>
    </location>
</feature>
<feature type="modified residue" description="Phosphoserine" evidence="1">
    <location>
        <position position="501"/>
    </location>
</feature>
<feature type="modified residue" description="Phosphoserine" evidence="1">
    <location>
        <position position="528"/>
    </location>
</feature>
<feature type="modified residue" description="Phosphoserine" evidence="1">
    <location>
        <position position="607"/>
    </location>
</feature>
<feature type="modified residue" description="Phosphoserine" evidence="1">
    <location>
        <position position="627"/>
    </location>
</feature>
<feature type="modified residue" description="Phosphoserine" evidence="1">
    <location>
        <position position="741"/>
    </location>
</feature>
<feature type="modified residue" description="Phosphoserine" evidence="1">
    <location>
        <position position="744"/>
    </location>
</feature>
<feature type="modified residue" description="Phosphoserine" evidence="13">
    <location>
        <position position="1107"/>
    </location>
</feature>
<feature type="modified residue" description="Phosphotyrosine" evidence="1">
    <location>
        <position position="1129"/>
    </location>
</feature>
<feature type="modified residue" description="Phosphoserine" evidence="13">
    <location>
        <position position="1143"/>
    </location>
</feature>
<feature type="modified residue" description="Phosphoserine" evidence="1">
    <location>
        <position position="1158"/>
    </location>
</feature>
<feature type="modified residue" description="Phosphoserine" evidence="1">
    <location>
        <position position="1161"/>
    </location>
</feature>
<feature type="modified residue" description="Phosphoserine" evidence="1">
    <location>
        <position position="1172"/>
    </location>
</feature>
<feature type="modified residue" description="Phosphoserine" evidence="1">
    <location>
        <position position="1173"/>
    </location>
</feature>
<feature type="modified residue" description="Omega-N-methylarginine" evidence="1">
    <location>
        <position position="1345"/>
    </location>
</feature>
<feature type="splice variant" id="VSP_041372" description="In isoform 2." evidence="9 10">
    <original>MEAGSGPPGGPGSESPNRAVEYLLELNNIIESQQQLLETQRRRIEELEGQLDQLTQENRDLREESQLHRGELHRDPHGARDSPGRESQYQNLRETQFHHRELRESQFHQAARDVGYPNREGAYQNREAVYRDKERDASYPLQDTTGYTARERDVAQCHLHHENPALGRERGGREAGPAHPGREKEAGYSAAVGVGPRPPRERGQLSRGASRSSSPGAGGGHSTSTSTSPATTLQRKSDGENSRTV</original>
    <variation>MEPPGRSSRSTASHTLHQYCCPTQVLDSMKLTPSGRLAES</variation>
    <location>
        <begin position="1"/>
        <end position="245"/>
    </location>
</feature>
<feature type="splice variant" id="VSP_059605" description="In isoform 3.">
    <original>MEAGSGPPGGPGSESPNRAVEYLLELNNIIESQQQLLETQRRRIEELEGQLDQLTQENRDLREESQLHRGELH</original>
    <variation>MEPPGRSSRSTASHTLHQYCCPTQVLDSMKLTPSGRLAESREEEEEEETEEEEEEDAHQFCCPASECSSPSSR</variation>
    <location>
        <begin position="1"/>
        <end position="73"/>
    </location>
</feature>
<feature type="splice variant" id="VSP_059606" description="In isoform 3.">
    <location>
        <begin position="74"/>
        <end position="1488"/>
    </location>
</feature>
<feature type="splice variant" id="VSP_041373" description="In isoform 2." evidence="9 10">
    <original>KRG</original>
    <variation>VCY</variation>
    <location>
        <begin position="1152"/>
        <end position="1154"/>
    </location>
</feature>
<feature type="splice variant" id="VSP_041374" description="In isoform 2." evidence="9 10">
    <location>
        <begin position="1155"/>
        <end position="1488"/>
    </location>
</feature>
<feature type="sequence variant" id="VAR_063742" description="In XLID1; dbSNP:rs267607188." evidence="6">
    <original>R</original>
    <variation>C</variation>
    <location>
        <position position="359"/>
    </location>
</feature>
<feature type="sequence variant" id="VAR_063743" description="In XLID1; dbSNP:rs267607189." evidence="6">
    <original>R</original>
    <variation>Q</variation>
    <location>
        <position position="758"/>
    </location>
</feature>
<feature type="sequence variant" id="VAR_078260" description="In XLID1; decreased guanine nucleotide exchange factor activity; dbSNP:rs875989799." evidence="7">
    <original>A</original>
    <variation>V</variation>
    <location>
        <position position="789"/>
    </location>
</feature>
<feature type="sequence variant" id="VAR_063744" description="In XLID1; dbSNP:rs267607187." evidence="6">
    <original>Q</original>
    <variation>P</variation>
    <location>
        <position position="801"/>
    </location>
</feature>
<feature type="sequence variant" id="VAR_063745" description="In XLID1; dbSNP:rs267607186." evidence="6">
    <original>R</original>
    <variation>W</variation>
    <location>
        <position position="863"/>
    </location>
</feature>
<feature type="sequence conflict" description="In Ref. 2; BAG53009." evidence="11" ref="2">
    <original>E</original>
    <variation>K</variation>
    <location>
        <position position="689"/>
    </location>
</feature>
<feature type="sequence conflict" description="In Ref. 2; BAG53009." evidence="11" ref="2">
    <original>E</original>
    <variation>G</variation>
    <location>
        <position position="805"/>
    </location>
</feature>
<feature type="helix" evidence="14">
    <location>
        <begin position="750"/>
        <end position="766"/>
    </location>
</feature>
<feature type="helix" evidence="14">
    <location>
        <begin position="768"/>
        <end position="777"/>
    </location>
</feature>
<feature type="helix" evidence="14">
    <location>
        <begin position="785"/>
        <end position="794"/>
    </location>
</feature>
<feature type="helix" evidence="14">
    <location>
        <begin position="800"/>
        <end position="807"/>
    </location>
</feature>
<feature type="helix" evidence="14">
    <location>
        <begin position="813"/>
        <end position="824"/>
    </location>
</feature>
<feature type="helix" evidence="14">
    <location>
        <begin position="833"/>
        <end position="843"/>
    </location>
</feature>
<feature type="strand" evidence="14">
    <location>
        <begin position="847"/>
        <end position="849"/>
    </location>
</feature>
<feature type="helix" evidence="14">
    <location>
        <begin position="850"/>
        <end position="867"/>
    </location>
</feature>
<feature type="helix" evidence="14">
    <location>
        <begin position="869"/>
        <end position="873"/>
    </location>
</feature>
<feature type="helix" evidence="14">
    <location>
        <begin position="879"/>
        <end position="896"/>
    </location>
</feature>
<feature type="helix" evidence="14">
    <location>
        <begin position="902"/>
        <end position="904"/>
    </location>
</feature>
<feature type="helix" evidence="14">
    <location>
        <begin position="908"/>
        <end position="914"/>
    </location>
</feature>
<feature type="turn" evidence="14">
    <location>
        <begin position="915"/>
        <end position="918"/>
    </location>
</feature>
<feature type="helix" evidence="14">
    <location>
        <begin position="926"/>
        <end position="938"/>
    </location>
</feature>
<feature type="helix" evidence="14">
    <location>
        <begin position="948"/>
        <end position="957"/>
    </location>
</feature>
<feature type="strand" evidence="14">
    <location>
        <begin position="958"/>
        <end position="961"/>
    </location>
</feature>
<feature type="strand" evidence="14">
    <location>
        <begin position="972"/>
        <end position="980"/>
    </location>
</feature>
<feature type="turn" evidence="14">
    <location>
        <begin position="990"/>
        <end position="993"/>
    </location>
</feature>
<feature type="strand" evidence="14">
    <location>
        <begin position="994"/>
        <end position="1000"/>
    </location>
</feature>
<feature type="strand" evidence="14">
    <location>
        <begin position="1003"/>
        <end position="1009"/>
    </location>
</feature>
<feature type="strand" evidence="14">
    <location>
        <begin position="1019"/>
        <end position="1026"/>
    </location>
</feature>
<feature type="strand" evidence="14">
    <location>
        <begin position="1030"/>
        <end position="1035"/>
    </location>
</feature>
<feature type="strand" evidence="14">
    <location>
        <begin position="1041"/>
        <end position="1048"/>
    </location>
</feature>
<feature type="strand" evidence="14">
    <location>
        <begin position="1057"/>
        <end position="1062"/>
    </location>
</feature>
<feature type="helix" evidence="14">
    <location>
        <begin position="1066"/>
        <end position="1092"/>
    </location>
</feature>
<protein>
    <recommendedName>
        <fullName>IQ motif and SEC7 domain-containing protein 2</fullName>
    </recommendedName>
</protein>
<gene>
    <name type="primary">IQSEC2</name>
    <name type="synonym">KIAA0522</name>
</gene>
<reference key="1">
    <citation type="journal article" date="1998" name="DNA Res.">
        <title>Prediction of the coding sequences of unidentified human genes. IX. The complete sequences of 100 new cDNA clones from brain which can code for large proteins in vitro.</title>
        <authorList>
            <person name="Nagase T."/>
            <person name="Ishikawa K."/>
            <person name="Miyajima N."/>
            <person name="Tanaka A."/>
            <person name="Kotani H."/>
            <person name="Nomura N."/>
            <person name="Ohara O."/>
        </authorList>
    </citation>
    <scope>NUCLEOTIDE SEQUENCE [LARGE SCALE MRNA] (ISOFORM 1)</scope>
    <scope>TISSUE SPECIFICITY</scope>
    <source>
        <tissue>Brain</tissue>
    </source>
</reference>
<reference key="2">
    <citation type="journal article" date="2004" name="Nat. Genet.">
        <title>Complete sequencing and characterization of 21,243 full-length human cDNAs.</title>
        <authorList>
            <person name="Ota T."/>
            <person name="Suzuki Y."/>
            <person name="Nishikawa T."/>
            <person name="Otsuki T."/>
            <person name="Sugiyama T."/>
            <person name="Irie R."/>
            <person name="Wakamatsu A."/>
            <person name="Hayashi K."/>
            <person name="Sato H."/>
            <person name="Nagai K."/>
            <person name="Kimura K."/>
            <person name="Makita H."/>
            <person name="Sekine M."/>
            <person name="Obayashi M."/>
            <person name="Nishi T."/>
            <person name="Shibahara T."/>
            <person name="Tanaka T."/>
            <person name="Ishii S."/>
            <person name="Yamamoto J."/>
            <person name="Saito K."/>
            <person name="Kawai Y."/>
            <person name="Isono Y."/>
            <person name="Nakamura Y."/>
            <person name="Nagahari K."/>
            <person name="Murakami K."/>
            <person name="Yasuda T."/>
            <person name="Iwayanagi T."/>
            <person name="Wagatsuma M."/>
            <person name="Shiratori A."/>
            <person name="Sudo H."/>
            <person name="Hosoiri T."/>
            <person name="Kaku Y."/>
            <person name="Kodaira H."/>
            <person name="Kondo H."/>
            <person name="Sugawara M."/>
            <person name="Takahashi M."/>
            <person name="Kanda K."/>
            <person name="Yokoi T."/>
            <person name="Furuya T."/>
            <person name="Kikkawa E."/>
            <person name="Omura Y."/>
            <person name="Abe K."/>
            <person name="Kamihara K."/>
            <person name="Katsuta N."/>
            <person name="Sato K."/>
            <person name="Tanikawa M."/>
            <person name="Yamazaki M."/>
            <person name="Ninomiya K."/>
            <person name="Ishibashi T."/>
            <person name="Yamashita H."/>
            <person name="Murakawa K."/>
            <person name="Fujimori K."/>
            <person name="Tanai H."/>
            <person name="Kimata M."/>
            <person name="Watanabe M."/>
            <person name="Hiraoka S."/>
            <person name="Chiba Y."/>
            <person name="Ishida S."/>
            <person name="Ono Y."/>
            <person name="Takiguchi S."/>
            <person name="Watanabe S."/>
            <person name="Yosida M."/>
            <person name="Hotuta T."/>
            <person name="Kusano J."/>
            <person name="Kanehori K."/>
            <person name="Takahashi-Fujii A."/>
            <person name="Hara H."/>
            <person name="Tanase T.-O."/>
            <person name="Nomura Y."/>
            <person name="Togiya S."/>
            <person name="Komai F."/>
            <person name="Hara R."/>
            <person name="Takeuchi K."/>
            <person name="Arita M."/>
            <person name="Imose N."/>
            <person name="Musashino K."/>
            <person name="Yuuki H."/>
            <person name="Oshima A."/>
            <person name="Sasaki N."/>
            <person name="Aotsuka S."/>
            <person name="Yoshikawa Y."/>
            <person name="Matsunawa H."/>
            <person name="Ichihara T."/>
            <person name="Shiohata N."/>
            <person name="Sano S."/>
            <person name="Moriya S."/>
            <person name="Momiyama H."/>
            <person name="Satoh N."/>
            <person name="Takami S."/>
            <person name="Terashima Y."/>
            <person name="Suzuki O."/>
            <person name="Nakagawa S."/>
            <person name="Senoh A."/>
            <person name="Mizoguchi H."/>
            <person name="Goto Y."/>
            <person name="Shimizu F."/>
            <person name="Wakebe H."/>
            <person name="Hishigaki H."/>
            <person name="Watanabe T."/>
            <person name="Sugiyama A."/>
            <person name="Takemoto M."/>
            <person name="Kawakami B."/>
            <person name="Yamazaki M."/>
            <person name="Watanabe K."/>
            <person name="Kumagai A."/>
            <person name="Itakura S."/>
            <person name="Fukuzumi Y."/>
            <person name="Fujimori Y."/>
            <person name="Komiyama M."/>
            <person name="Tashiro H."/>
            <person name="Tanigami A."/>
            <person name="Fujiwara T."/>
            <person name="Ono T."/>
            <person name="Yamada K."/>
            <person name="Fujii Y."/>
            <person name="Ozaki K."/>
            <person name="Hirao M."/>
            <person name="Ohmori Y."/>
            <person name="Kawabata A."/>
            <person name="Hikiji T."/>
            <person name="Kobatake N."/>
            <person name="Inagaki H."/>
            <person name="Ikema Y."/>
            <person name="Okamoto S."/>
            <person name="Okitani R."/>
            <person name="Kawakami T."/>
            <person name="Noguchi S."/>
            <person name="Itoh T."/>
            <person name="Shigeta K."/>
            <person name="Senba T."/>
            <person name="Matsumura K."/>
            <person name="Nakajima Y."/>
            <person name="Mizuno T."/>
            <person name="Morinaga M."/>
            <person name="Sasaki M."/>
            <person name="Togashi T."/>
            <person name="Oyama M."/>
            <person name="Hata H."/>
            <person name="Watanabe M."/>
            <person name="Komatsu T."/>
            <person name="Mizushima-Sugano J."/>
            <person name="Satoh T."/>
            <person name="Shirai Y."/>
            <person name="Takahashi Y."/>
            <person name="Nakagawa K."/>
            <person name="Okumura K."/>
            <person name="Nagase T."/>
            <person name="Nomura N."/>
            <person name="Kikuchi H."/>
            <person name="Masuho Y."/>
            <person name="Yamashita R."/>
            <person name="Nakai K."/>
            <person name="Yada T."/>
            <person name="Nakamura Y."/>
            <person name="Ohara O."/>
            <person name="Isogai T."/>
            <person name="Sugano S."/>
        </authorList>
    </citation>
    <scope>NUCLEOTIDE SEQUENCE [LARGE SCALE MRNA] (ISOFORM 2)</scope>
    <source>
        <tissue>Tongue</tissue>
    </source>
</reference>
<reference key="3">
    <citation type="journal article" date="2005" name="Nature">
        <title>The DNA sequence of the human X chromosome.</title>
        <authorList>
            <person name="Ross M.T."/>
            <person name="Grafham D.V."/>
            <person name="Coffey A.J."/>
            <person name="Scherer S."/>
            <person name="McLay K."/>
            <person name="Muzny D."/>
            <person name="Platzer M."/>
            <person name="Howell G.R."/>
            <person name="Burrows C."/>
            <person name="Bird C.P."/>
            <person name="Frankish A."/>
            <person name="Lovell F.L."/>
            <person name="Howe K.L."/>
            <person name="Ashurst J.L."/>
            <person name="Fulton R.S."/>
            <person name="Sudbrak R."/>
            <person name="Wen G."/>
            <person name="Jones M.C."/>
            <person name="Hurles M.E."/>
            <person name="Andrews T.D."/>
            <person name="Scott C.E."/>
            <person name="Searle S."/>
            <person name="Ramser J."/>
            <person name="Whittaker A."/>
            <person name="Deadman R."/>
            <person name="Carter N.P."/>
            <person name="Hunt S.E."/>
            <person name="Chen R."/>
            <person name="Cree A."/>
            <person name="Gunaratne P."/>
            <person name="Havlak P."/>
            <person name="Hodgson A."/>
            <person name="Metzker M.L."/>
            <person name="Richards S."/>
            <person name="Scott G."/>
            <person name="Steffen D."/>
            <person name="Sodergren E."/>
            <person name="Wheeler D.A."/>
            <person name="Worley K.C."/>
            <person name="Ainscough R."/>
            <person name="Ambrose K.D."/>
            <person name="Ansari-Lari M.A."/>
            <person name="Aradhya S."/>
            <person name="Ashwell R.I."/>
            <person name="Babbage A.K."/>
            <person name="Bagguley C.L."/>
            <person name="Ballabio A."/>
            <person name="Banerjee R."/>
            <person name="Barker G.E."/>
            <person name="Barlow K.F."/>
            <person name="Barrett I.P."/>
            <person name="Bates K.N."/>
            <person name="Beare D.M."/>
            <person name="Beasley H."/>
            <person name="Beasley O."/>
            <person name="Beck A."/>
            <person name="Bethel G."/>
            <person name="Blechschmidt K."/>
            <person name="Brady N."/>
            <person name="Bray-Allen S."/>
            <person name="Bridgeman A.M."/>
            <person name="Brown A.J."/>
            <person name="Brown M.J."/>
            <person name="Bonnin D."/>
            <person name="Bruford E.A."/>
            <person name="Buhay C."/>
            <person name="Burch P."/>
            <person name="Burford D."/>
            <person name="Burgess J."/>
            <person name="Burrill W."/>
            <person name="Burton J."/>
            <person name="Bye J.M."/>
            <person name="Carder C."/>
            <person name="Carrel L."/>
            <person name="Chako J."/>
            <person name="Chapman J.C."/>
            <person name="Chavez D."/>
            <person name="Chen E."/>
            <person name="Chen G."/>
            <person name="Chen Y."/>
            <person name="Chen Z."/>
            <person name="Chinault C."/>
            <person name="Ciccodicola A."/>
            <person name="Clark S.Y."/>
            <person name="Clarke G."/>
            <person name="Clee C.M."/>
            <person name="Clegg S."/>
            <person name="Clerc-Blankenburg K."/>
            <person name="Clifford K."/>
            <person name="Cobley V."/>
            <person name="Cole C.G."/>
            <person name="Conquer J.S."/>
            <person name="Corby N."/>
            <person name="Connor R.E."/>
            <person name="David R."/>
            <person name="Davies J."/>
            <person name="Davis C."/>
            <person name="Davis J."/>
            <person name="Delgado O."/>
            <person name="Deshazo D."/>
            <person name="Dhami P."/>
            <person name="Ding Y."/>
            <person name="Dinh H."/>
            <person name="Dodsworth S."/>
            <person name="Draper H."/>
            <person name="Dugan-Rocha S."/>
            <person name="Dunham A."/>
            <person name="Dunn M."/>
            <person name="Durbin K.J."/>
            <person name="Dutta I."/>
            <person name="Eades T."/>
            <person name="Ellwood M."/>
            <person name="Emery-Cohen A."/>
            <person name="Errington H."/>
            <person name="Evans K.L."/>
            <person name="Faulkner L."/>
            <person name="Francis F."/>
            <person name="Frankland J."/>
            <person name="Fraser A.E."/>
            <person name="Galgoczy P."/>
            <person name="Gilbert J."/>
            <person name="Gill R."/>
            <person name="Gloeckner G."/>
            <person name="Gregory S.G."/>
            <person name="Gribble S."/>
            <person name="Griffiths C."/>
            <person name="Grocock R."/>
            <person name="Gu Y."/>
            <person name="Gwilliam R."/>
            <person name="Hamilton C."/>
            <person name="Hart E.A."/>
            <person name="Hawes A."/>
            <person name="Heath P.D."/>
            <person name="Heitmann K."/>
            <person name="Hennig S."/>
            <person name="Hernandez J."/>
            <person name="Hinzmann B."/>
            <person name="Ho S."/>
            <person name="Hoffs M."/>
            <person name="Howden P.J."/>
            <person name="Huckle E.J."/>
            <person name="Hume J."/>
            <person name="Hunt P.J."/>
            <person name="Hunt A.R."/>
            <person name="Isherwood J."/>
            <person name="Jacob L."/>
            <person name="Johnson D."/>
            <person name="Jones S."/>
            <person name="de Jong P.J."/>
            <person name="Joseph S.S."/>
            <person name="Keenan S."/>
            <person name="Kelly S."/>
            <person name="Kershaw J.K."/>
            <person name="Khan Z."/>
            <person name="Kioschis P."/>
            <person name="Klages S."/>
            <person name="Knights A.J."/>
            <person name="Kosiura A."/>
            <person name="Kovar-Smith C."/>
            <person name="Laird G.K."/>
            <person name="Langford C."/>
            <person name="Lawlor S."/>
            <person name="Leversha M."/>
            <person name="Lewis L."/>
            <person name="Liu W."/>
            <person name="Lloyd C."/>
            <person name="Lloyd D.M."/>
            <person name="Loulseged H."/>
            <person name="Loveland J.E."/>
            <person name="Lovell J.D."/>
            <person name="Lozado R."/>
            <person name="Lu J."/>
            <person name="Lyne R."/>
            <person name="Ma J."/>
            <person name="Maheshwari M."/>
            <person name="Matthews L.H."/>
            <person name="McDowall J."/>
            <person name="McLaren S."/>
            <person name="McMurray A."/>
            <person name="Meidl P."/>
            <person name="Meitinger T."/>
            <person name="Milne S."/>
            <person name="Miner G."/>
            <person name="Mistry S.L."/>
            <person name="Morgan M."/>
            <person name="Morris S."/>
            <person name="Mueller I."/>
            <person name="Mullikin J.C."/>
            <person name="Nguyen N."/>
            <person name="Nordsiek G."/>
            <person name="Nyakatura G."/>
            <person name="O'dell C.N."/>
            <person name="Okwuonu G."/>
            <person name="Palmer S."/>
            <person name="Pandian R."/>
            <person name="Parker D."/>
            <person name="Parrish J."/>
            <person name="Pasternak S."/>
            <person name="Patel D."/>
            <person name="Pearce A.V."/>
            <person name="Pearson D.M."/>
            <person name="Pelan S.E."/>
            <person name="Perez L."/>
            <person name="Porter K.M."/>
            <person name="Ramsey Y."/>
            <person name="Reichwald K."/>
            <person name="Rhodes S."/>
            <person name="Ridler K.A."/>
            <person name="Schlessinger D."/>
            <person name="Schueler M.G."/>
            <person name="Sehra H.K."/>
            <person name="Shaw-Smith C."/>
            <person name="Shen H."/>
            <person name="Sheridan E.M."/>
            <person name="Shownkeen R."/>
            <person name="Skuce C.D."/>
            <person name="Smith M.L."/>
            <person name="Sotheran E.C."/>
            <person name="Steingruber H.E."/>
            <person name="Steward C.A."/>
            <person name="Storey R."/>
            <person name="Swann R.M."/>
            <person name="Swarbreck D."/>
            <person name="Tabor P.E."/>
            <person name="Taudien S."/>
            <person name="Taylor T."/>
            <person name="Teague B."/>
            <person name="Thomas K."/>
            <person name="Thorpe A."/>
            <person name="Timms K."/>
            <person name="Tracey A."/>
            <person name="Trevanion S."/>
            <person name="Tromans A.C."/>
            <person name="d'Urso M."/>
            <person name="Verduzco D."/>
            <person name="Villasana D."/>
            <person name="Waldron L."/>
            <person name="Wall M."/>
            <person name="Wang Q."/>
            <person name="Warren J."/>
            <person name="Warry G.L."/>
            <person name="Wei X."/>
            <person name="West A."/>
            <person name="Whitehead S.L."/>
            <person name="Whiteley M.N."/>
            <person name="Wilkinson J.E."/>
            <person name="Willey D.L."/>
            <person name="Williams G."/>
            <person name="Williams L."/>
            <person name="Williamson A."/>
            <person name="Williamson H."/>
            <person name="Wilming L."/>
            <person name="Woodmansey R.L."/>
            <person name="Wray P.W."/>
            <person name="Yen J."/>
            <person name="Zhang J."/>
            <person name="Zhou J."/>
            <person name="Zoghbi H."/>
            <person name="Zorilla S."/>
            <person name="Buck D."/>
            <person name="Reinhardt R."/>
            <person name="Poustka A."/>
            <person name="Rosenthal A."/>
            <person name="Lehrach H."/>
            <person name="Meindl A."/>
            <person name="Minx P.J."/>
            <person name="Hillier L.W."/>
            <person name="Willard H.F."/>
            <person name="Wilson R.K."/>
            <person name="Waterston R.H."/>
            <person name="Rice C.M."/>
            <person name="Vaudin M."/>
            <person name="Coulson A."/>
            <person name="Nelson D.L."/>
            <person name="Weinstock G."/>
            <person name="Sulston J.E."/>
            <person name="Durbin R.M."/>
            <person name="Hubbard T."/>
            <person name="Gibbs R.A."/>
            <person name="Beck S."/>
            <person name="Rogers J."/>
            <person name="Bentley D.R."/>
        </authorList>
    </citation>
    <scope>NUCLEOTIDE SEQUENCE [LARGE SCALE GENOMIC DNA]</scope>
</reference>
<reference key="4">
    <citation type="submission" date="2008-08" db="EMBL/GenBank/DDBJ databases">
        <title>PH domain targets the Arf-GEF BRAG1 to the plasma membrane.</title>
        <authorList>
            <person name="Shapovalova Z."/>
            <person name="Lasell T.K."/>
            <person name="Smith C."/>
            <person name="Melancon P."/>
        </authorList>
    </citation>
    <scope>NUCLEOTIDE SEQUENCE [MRNA] OF 1-494 (ISOFORM 2)</scope>
</reference>
<reference key="5">
    <citation type="journal article" date="2011" name="Sci. Signal.">
        <title>System-wide temporal characterization of the proteome and phosphoproteome of human embryonic stem cell differentiation.</title>
        <authorList>
            <person name="Rigbolt K.T."/>
            <person name="Prokhorova T.A."/>
            <person name="Akimov V."/>
            <person name="Henningsen J."/>
            <person name="Johansen P.T."/>
            <person name="Kratchmarova I."/>
            <person name="Kassem M."/>
            <person name="Mann M."/>
            <person name="Olsen J.V."/>
            <person name="Blagoev B."/>
        </authorList>
    </citation>
    <scope>PHOSPHORYLATION [LARGE SCALE ANALYSIS] AT SER-393</scope>
    <scope>IDENTIFICATION BY MASS SPECTROMETRY [LARGE SCALE ANALYSIS]</scope>
</reference>
<reference key="6">
    <citation type="journal article" date="2013" name="J. Proteome Res.">
        <title>Toward a comprehensive characterization of a human cancer cell phosphoproteome.</title>
        <authorList>
            <person name="Zhou H."/>
            <person name="Di Palma S."/>
            <person name="Preisinger C."/>
            <person name="Peng M."/>
            <person name="Polat A.N."/>
            <person name="Heck A.J."/>
            <person name="Mohammed S."/>
        </authorList>
    </citation>
    <scope>PHOSPHORYLATION [LARGE SCALE ANALYSIS] AT SER-344; SER-393; SER-412; SER-1107 AND SER-1143</scope>
    <scope>IDENTIFICATION BY MASS SPECTROMETRY [LARGE SCALE ANALYSIS]</scope>
    <source>
        <tissue>Cervix carcinoma</tissue>
        <tissue>Erythroleukemia</tissue>
    </source>
</reference>
<reference key="7">
    <citation type="journal article" date="2014" name="J. Proteomics">
        <title>An enzyme assisted RP-RPLC approach for in-depth analysis of human liver phosphoproteome.</title>
        <authorList>
            <person name="Bian Y."/>
            <person name="Song C."/>
            <person name="Cheng K."/>
            <person name="Dong M."/>
            <person name="Wang F."/>
            <person name="Huang J."/>
            <person name="Sun D."/>
            <person name="Wang L."/>
            <person name="Ye M."/>
            <person name="Zou H."/>
        </authorList>
    </citation>
    <scope>IDENTIFICATION BY MASS SPECTROMETRY [LARGE SCALE ANALYSIS]</scope>
    <source>
        <tissue>Liver</tissue>
    </source>
</reference>
<reference key="8">
    <citation type="journal article" date="2015" name="Front. Mol. Neurosci.">
        <title>Novel missense mutation A789V in IQSEC2 underlies X-linked intellectual disability in the MRX78 family.</title>
        <authorList>
            <person name="Kalscheuer V.M."/>
            <person name="James V.M."/>
            <person name="Himelright M.L."/>
            <person name="Long P."/>
            <person name="Oegema R."/>
            <person name="Jensen C."/>
            <person name="Bienek M."/>
            <person name="Hu H."/>
            <person name="Haas S.A."/>
            <person name="Topf M."/>
            <person name="Hoogeboom A.J."/>
            <person name="Harvey K."/>
            <person name="Walikonis R."/>
            <person name="Harvey R.J."/>
        </authorList>
    </citation>
    <scope>FUNCTION</scope>
    <scope>VARIANT XLID1 VAL-789</scope>
    <scope>CHARACTERIZATION OF VARIANT XLID1 VAL-789</scope>
</reference>
<reference key="9">
    <citation type="journal article" date="2010" name="Nat. Genet.">
        <title>Mutations in the guanine nucleotide exchange factor gene IQSEC2 cause nonsyndromic intellectual disability.</title>
        <authorList>
            <person name="Shoubridge C."/>
            <person name="Tarpey P.S."/>
            <person name="Abidi F."/>
            <person name="Ramsden S.L."/>
            <person name="Rujirabanjerd S."/>
            <person name="Murphy J.A."/>
            <person name="Boyle J."/>
            <person name="Shaw M."/>
            <person name="Gardner A."/>
            <person name="Proos A."/>
            <person name="Puusepp H."/>
            <person name="Raymond F.L."/>
            <person name="Schwartz C.E."/>
            <person name="Stevenson R.E."/>
            <person name="Turner G."/>
            <person name="Field M."/>
            <person name="Walikonis R.S."/>
            <person name="Harvey R.J."/>
            <person name="Hackett A."/>
            <person name="Futreal P.A."/>
            <person name="Stratton M.R."/>
            <person name="Gecz J."/>
        </authorList>
    </citation>
    <scope>VARIANTS XLID1 CYS-359; GLN-758; PRO-801 AND TRP-863</scope>
</reference>